<accession>Q10UX2</accession>
<feature type="chain" id="PRO_0000403170" description="Chromophore lyase CpcT/CpeT 2">
    <location>
        <begin position="1"/>
        <end position="195"/>
    </location>
</feature>
<reference key="1">
    <citation type="journal article" date="2015" name="Proc. Natl. Acad. Sci. U.S.A.">
        <title>Trichodesmium genome maintains abundant, widespread noncoding DNA in situ, despite oligotrophic lifestyle.</title>
        <authorList>
            <person name="Walworth N."/>
            <person name="Pfreundt U."/>
            <person name="Nelson W.C."/>
            <person name="Mincer T."/>
            <person name="Heidelberg J.F."/>
            <person name="Fu F."/>
            <person name="Waterbury J.B."/>
            <person name="Glavina del Rio T."/>
            <person name="Goodwin L."/>
            <person name="Kyrpides N.C."/>
            <person name="Land M.L."/>
            <person name="Woyke T."/>
            <person name="Hutchins D.A."/>
            <person name="Hess W.R."/>
            <person name="Webb E.A."/>
        </authorList>
    </citation>
    <scope>NUCLEOTIDE SEQUENCE [LARGE SCALE GENOMIC DNA]</scope>
    <source>
        <strain>IMS101</strain>
    </source>
</reference>
<gene>
    <name evidence="1" type="primary">cpcT2</name>
    <name type="ordered locus">Tery_5043</name>
</gene>
<protein>
    <recommendedName>
        <fullName evidence="1">Chromophore lyase CpcT/CpeT 2</fullName>
        <ecNumber evidence="1">4.-.-.-</ecNumber>
    </recommendedName>
</protein>
<organism>
    <name type="scientific">Trichodesmium erythraeum (strain IMS101)</name>
    <dbReference type="NCBI Taxonomy" id="203124"/>
    <lineage>
        <taxon>Bacteria</taxon>
        <taxon>Bacillati</taxon>
        <taxon>Cyanobacteriota</taxon>
        <taxon>Cyanophyceae</taxon>
        <taxon>Oscillatoriophycideae</taxon>
        <taxon>Oscillatoriales</taxon>
        <taxon>Microcoleaceae</taxon>
        <taxon>Trichodesmium</taxon>
    </lineage>
</organism>
<name>CPXT2_TRIEI</name>
<sequence length="195" mass="22538">MTHSTDITTLARWFAADFSNQQQAFDNPPLFAHIRVCMRPLPYQLLNGLSLYLEQAYDITLNQPYRVRVLKLVPSENHIEIENYIIDQEAEFYGASRDPQRLKNLKTEYIKKLPGCTFITKWTGKSFKGEVEPGKGCTVVREGKSTYLKSYFEINEHKFISHDTGYDPETDQQVWGAIAGPFEFVRWASFADEVI</sequence>
<dbReference type="EC" id="4.-.-.-" evidence="1"/>
<dbReference type="EMBL" id="CP000393">
    <property type="protein sequence ID" value="ABG53952.1"/>
    <property type="molecule type" value="Genomic_DNA"/>
</dbReference>
<dbReference type="RefSeq" id="WP_011614245.1">
    <property type="nucleotide sequence ID" value="NC_008312.1"/>
</dbReference>
<dbReference type="SMR" id="Q10UX2"/>
<dbReference type="STRING" id="203124.Tery_5043"/>
<dbReference type="DNASU" id="4246698"/>
<dbReference type="KEGG" id="ter:Tery_5043"/>
<dbReference type="eggNOG" id="ENOG502Z877">
    <property type="taxonomic scope" value="Bacteria"/>
</dbReference>
<dbReference type="HOGENOM" id="CLU_092589_0_0_3"/>
<dbReference type="OrthoDB" id="509174at2"/>
<dbReference type="GO" id="GO:0016829">
    <property type="term" value="F:lyase activity"/>
    <property type="evidence" value="ECO:0007669"/>
    <property type="project" value="UniProtKB-KW"/>
</dbReference>
<dbReference type="CDD" id="cd16338">
    <property type="entry name" value="CpcT"/>
    <property type="match status" value="1"/>
</dbReference>
<dbReference type="Gene3D" id="2.40.128.590">
    <property type="entry name" value="CpcT/CpeT domain"/>
    <property type="match status" value="1"/>
</dbReference>
<dbReference type="HAMAP" id="MF_01460">
    <property type="entry name" value="Chrphore_lyase_CpxT"/>
    <property type="match status" value="1"/>
</dbReference>
<dbReference type="InterPro" id="IPR010404">
    <property type="entry name" value="CpcT/CpeT"/>
</dbReference>
<dbReference type="InterPro" id="IPR038672">
    <property type="entry name" value="CpcT/CpeT_sf"/>
</dbReference>
<dbReference type="PANTHER" id="PTHR35137">
    <property type="entry name" value="CHROMOPHORE LYASE CRL, CHLOROPLASTIC"/>
    <property type="match status" value="1"/>
</dbReference>
<dbReference type="PANTHER" id="PTHR35137:SF1">
    <property type="entry name" value="CHROMOPHORE LYASE CRL, CHLOROPLASTIC"/>
    <property type="match status" value="1"/>
</dbReference>
<dbReference type="Pfam" id="PF06206">
    <property type="entry name" value="CpeT"/>
    <property type="match status" value="1"/>
</dbReference>
<keyword id="KW-0456">Lyase</keyword>
<comment type="function">
    <text evidence="1">Covalently attaches a chromophore to Cys residue(s) of phycobiliproteins.</text>
</comment>
<comment type="similarity">
    <text evidence="1">Belongs to the CpcT/CpeT biliprotein lyase family.</text>
</comment>
<evidence type="ECO:0000255" key="1">
    <source>
        <dbReference type="HAMAP-Rule" id="MF_01460"/>
    </source>
</evidence>
<proteinExistence type="inferred from homology"/>